<name>CMOB_CAMJE</name>
<dbReference type="EC" id="2.5.1.-" evidence="1"/>
<dbReference type="EMBL" id="AL111168">
    <property type="protein sequence ID" value="CAL35094.1"/>
    <property type="status" value="ALT_INIT"/>
    <property type="molecule type" value="Genomic_DNA"/>
</dbReference>
<dbReference type="PIR" id="E81372">
    <property type="entry name" value="E81372"/>
</dbReference>
<dbReference type="RefSeq" id="YP_002344371.1">
    <property type="nucleotide sequence ID" value="NC_002163.1"/>
</dbReference>
<dbReference type="SMR" id="Q0P9S6"/>
<dbReference type="IntAct" id="Q0P9S6">
    <property type="interactions" value="3"/>
</dbReference>
<dbReference type="STRING" id="192222.Cj0976"/>
<dbReference type="PaxDb" id="192222-Cj0976"/>
<dbReference type="DNASU" id="905267"/>
<dbReference type="EnsemblBacteria" id="CAL35094">
    <property type="protein sequence ID" value="CAL35094"/>
    <property type="gene ID" value="Cj0976"/>
</dbReference>
<dbReference type="GeneID" id="905267"/>
<dbReference type="KEGG" id="cje:Cj0976"/>
<dbReference type="PATRIC" id="fig|192222.6.peg.959"/>
<dbReference type="eggNOG" id="COG0500">
    <property type="taxonomic scope" value="Bacteria"/>
</dbReference>
<dbReference type="HOGENOM" id="CLU_052665_1_0_7"/>
<dbReference type="OrthoDB" id="9765084at2"/>
<dbReference type="Proteomes" id="UP000000799">
    <property type="component" value="Chromosome"/>
</dbReference>
<dbReference type="GO" id="GO:0016765">
    <property type="term" value="F:transferase activity, transferring alkyl or aryl (other than methyl) groups"/>
    <property type="evidence" value="ECO:0007669"/>
    <property type="project" value="InterPro"/>
</dbReference>
<dbReference type="GO" id="GO:0002098">
    <property type="term" value="P:tRNA wobble uridine modification"/>
    <property type="evidence" value="ECO:0007669"/>
    <property type="project" value="InterPro"/>
</dbReference>
<dbReference type="CDD" id="cd02440">
    <property type="entry name" value="AdoMet_MTases"/>
    <property type="match status" value="1"/>
</dbReference>
<dbReference type="Gene3D" id="3.40.50.150">
    <property type="entry name" value="Vaccinia Virus protein VP39"/>
    <property type="match status" value="1"/>
</dbReference>
<dbReference type="HAMAP" id="MF_01590">
    <property type="entry name" value="tRNA_carboxymethyltr_CmoB"/>
    <property type="match status" value="1"/>
</dbReference>
<dbReference type="InterPro" id="IPR010017">
    <property type="entry name" value="CmoB"/>
</dbReference>
<dbReference type="InterPro" id="IPR027555">
    <property type="entry name" value="Mo5U34_MeTrfas-like"/>
</dbReference>
<dbReference type="InterPro" id="IPR029063">
    <property type="entry name" value="SAM-dependent_MTases_sf"/>
</dbReference>
<dbReference type="NCBIfam" id="NF011650">
    <property type="entry name" value="PRK15068.1"/>
    <property type="match status" value="1"/>
</dbReference>
<dbReference type="NCBIfam" id="TIGR00452">
    <property type="entry name" value="tRNA 5-methoxyuridine(34)/uridine 5-oxyacetic acid(34) synthase CmoB"/>
    <property type="match status" value="1"/>
</dbReference>
<dbReference type="PANTHER" id="PTHR43861">
    <property type="entry name" value="TRANS-ACONITATE 2-METHYLTRANSFERASE-RELATED"/>
    <property type="match status" value="1"/>
</dbReference>
<dbReference type="Pfam" id="PF08003">
    <property type="entry name" value="Methyltransf_9"/>
    <property type="match status" value="1"/>
</dbReference>
<dbReference type="SUPFAM" id="SSF53335">
    <property type="entry name" value="S-adenosyl-L-methionine-dependent methyltransferases"/>
    <property type="match status" value="1"/>
</dbReference>
<gene>
    <name evidence="1" type="primary">cmoB</name>
    <name type="ordered locus">Cj0976</name>
</gene>
<feature type="chain" id="PRO_0000313905" description="tRNA U34 carboxymethyltransferase">
    <location>
        <begin position="1"/>
        <end position="291"/>
    </location>
</feature>
<feature type="binding site" evidence="1">
    <location>
        <position position="61"/>
    </location>
    <ligand>
        <name>carboxy-S-adenosyl-L-methionine</name>
        <dbReference type="ChEBI" id="CHEBI:134278"/>
    </ligand>
</feature>
<feature type="binding site" evidence="1">
    <location>
        <position position="75"/>
    </location>
    <ligand>
        <name>carboxy-S-adenosyl-L-methionine</name>
        <dbReference type="ChEBI" id="CHEBI:134278"/>
    </ligand>
</feature>
<feature type="binding site" evidence="1">
    <location>
        <position position="80"/>
    </location>
    <ligand>
        <name>carboxy-S-adenosyl-L-methionine</name>
        <dbReference type="ChEBI" id="CHEBI:134278"/>
    </ligand>
</feature>
<feature type="binding site" evidence="1">
    <location>
        <position position="100"/>
    </location>
    <ligand>
        <name>carboxy-S-adenosyl-L-methionine</name>
        <dbReference type="ChEBI" id="CHEBI:134278"/>
    </ligand>
</feature>
<feature type="binding site" evidence="1">
    <location>
        <begin position="122"/>
        <end position="124"/>
    </location>
    <ligand>
        <name>carboxy-S-adenosyl-L-methionine</name>
        <dbReference type="ChEBI" id="CHEBI:134278"/>
    </ligand>
</feature>
<feature type="binding site" evidence="1">
    <location>
        <begin position="149"/>
        <end position="150"/>
    </location>
    <ligand>
        <name>carboxy-S-adenosyl-L-methionine</name>
        <dbReference type="ChEBI" id="CHEBI:134278"/>
    </ligand>
</feature>
<feature type="binding site" evidence="1">
    <location>
        <position position="169"/>
    </location>
    <ligand>
        <name>carboxy-S-adenosyl-L-methionine</name>
        <dbReference type="ChEBI" id="CHEBI:134278"/>
    </ligand>
</feature>
<feature type="binding site" evidence="1">
    <location>
        <position position="284"/>
    </location>
    <ligand>
        <name>carboxy-S-adenosyl-L-methionine</name>
        <dbReference type="ChEBI" id="CHEBI:134278"/>
    </ligand>
</feature>
<keyword id="KW-1185">Reference proteome</keyword>
<keyword id="KW-0808">Transferase</keyword>
<keyword id="KW-0819">tRNA processing</keyword>
<comment type="function">
    <text evidence="1">Catalyzes carboxymethyl transfer from carboxy-S-adenosyl-L-methionine (Cx-SAM) to 5-hydroxyuridine (ho5U) to form 5-carboxymethoxyuridine (cmo5U) at position 34 in tRNAs.</text>
</comment>
<comment type="catalytic activity">
    <reaction evidence="1">
        <text>carboxy-S-adenosyl-L-methionine + 5-hydroxyuridine(34) in tRNA = 5-carboxymethoxyuridine(34) in tRNA + S-adenosyl-L-homocysteine + H(+)</text>
        <dbReference type="Rhea" id="RHEA:52848"/>
        <dbReference type="Rhea" id="RHEA-COMP:13381"/>
        <dbReference type="Rhea" id="RHEA-COMP:13383"/>
        <dbReference type="ChEBI" id="CHEBI:15378"/>
        <dbReference type="ChEBI" id="CHEBI:57856"/>
        <dbReference type="ChEBI" id="CHEBI:134278"/>
        <dbReference type="ChEBI" id="CHEBI:136877"/>
        <dbReference type="ChEBI" id="CHEBI:136879"/>
    </reaction>
</comment>
<comment type="subunit">
    <text evidence="1">Homotetramer.</text>
</comment>
<comment type="similarity">
    <text evidence="1">Belongs to the class I-like SAM-binding methyltransferase superfamily. CmoB family.</text>
</comment>
<comment type="sequence caution" evidence="2">
    <conflict type="erroneous initiation">
        <sequence resource="EMBL-CDS" id="CAL35094"/>
    </conflict>
</comment>
<protein>
    <recommendedName>
        <fullName evidence="1">tRNA U34 carboxymethyltransferase</fullName>
        <ecNumber evidence="1">2.5.1.-</ecNumber>
    </recommendedName>
</protein>
<sequence>MQENLLEKQFLNHPLYAKIQELKALNLACNFSLGDSVNLSTNSQAKDEILAIAKELKPWRKGPFKIDDLFIDTEWQSFIKFNILKPFMNEISQKCVADIGCNNGYYMFKMLEFNPAKLIGFDPSIKYRLQFELINALAKTPIKYELLGVEDLPSYSLKFDVIFCLGVIYHRSDPIKMLKDLKAGLNKNGVVFLDTMYIEDEREIALVPNKTYSKIPNIYFVPSISALKNWCERAGFKEFEVLATKKTDENEQRKTEWIDSFSLENFLDPKDKNLTIEGYEAPKRVYIRIKI</sequence>
<proteinExistence type="inferred from homology"/>
<evidence type="ECO:0000255" key="1">
    <source>
        <dbReference type="HAMAP-Rule" id="MF_01590"/>
    </source>
</evidence>
<evidence type="ECO:0000305" key="2"/>
<reference key="1">
    <citation type="journal article" date="2000" name="Nature">
        <title>The genome sequence of the food-borne pathogen Campylobacter jejuni reveals hypervariable sequences.</title>
        <authorList>
            <person name="Parkhill J."/>
            <person name="Wren B.W."/>
            <person name="Mungall K.L."/>
            <person name="Ketley J.M."/>
            <person name="Churcher C.M."/>
            <person name="Basham D."/>
            <person name="Chillingworth T."/>
            <person name="Davies R.M."/>
            <person name="Feltwell T."/>
            <person name="Holroyd S."/>
            <person name="Jagels K."/>
            <person name="Karlyshev A.V."/>
            <person name="Moule S."/>
            <person name="Pallen M.J."/>
            <person name="Penn C.W."/>
            <person name="Quail M.A."/>
            <person name="Rajandream M.A."/>
            <person name="Rutherford K.M."/>
            <person name="van Vliet A.H.M."/>
            <person name="Whitehead S."/>
            <person name="Barrell B.G."/>
        </authorList>
    </citation>
    <scope>NUCLEOTIDE SEQUENCE [LARGE SCALE GENOMIC DNA]</scope>
    <source>
        <strain>ATCC 700819 / NCTC 11168</strain>
    </source>
</reference>
<accession>Q0P9S6</accession>
<organism>
    <name type="scientific">Campylobacter jejuni subsp. jejuni serotype O:2 (strain ATCC 700819 / NCTC 11168)</name>
    <dbReference type="NCBI Taxonomy" id="192222"/>
    <lineage>
        <taxon>Bacteria</taxon>
        <taxon>Pseudomonadati</taxon>
        <taxon>Campylobacterota</taxon>
        <taxon>Epsilonproteobacteria</taxon>
        <taxon>Campylobacterales</taxon>
        <taxon>Campylobacteraceae</taxon>
        <taxon>Campylobacter</taxon>
    </lineage>
</organism>